<protein>
    <recommendedName>
        <fullName evidence="1">ATP-dependent zinc metalloprotease FtsH</fullName>
        <ecNumber evidence="1">3.4.24.-</ecNumber>
    </recommendedName>
</protein>
<reference key="1">
    <citation type="submission" date="2006-10" db="EMBL/GenBank/DDBJ databases">
        <title>Complete sequence of chromosome of Pelobacter propionicus DSM 2379.</title>
        <authorList>
            <consortium name="US DOE Joint Genome Institute"/>
            <person name="Copeland A."/>
            <person name="Lucas S."/>
            <person name="Lapidus A."/>
            <person name="Barry K."/>
            <person name="Detter J.C."/>
            <person name="Glavina del Rio T."/>
            <person name="Hammon N."/>
            <person name="Israni S."/>
            <person name="Dalin E."/>
            <person name="Tice H."/>
            <person name="Pitluck S."/>
            <person name="Saunders E."/>
            <person name="Brettin T."/>
            <person name="Bruce D."/>
            <person name="Han C."/>
            <person name="Tapia R."/>
            <person name="Schmutz J."/>
            <person name="Larimer F."/>
            <person name="Land M."/>
            <person name="Hauser L."/>
            <person name="Kyrpides N."/>
            <person name="Kim E."/>
            <person name="Lovley D."/>
            <person name="Richardson P."/>
        </authorList>
    </citation>
    <scope>NUCLEOTIDE SEQUENCE [LARGE SCALE GENOMIC DNA]</scope>
    <source>
        <strain>DSM 2379 / NBRC 103807 / OttBd1</strain>
    </source>
</reference>
<proteinExistence type="inferred from homology"/>
<dbReference type="EC" id="3.4.24.-" evidence="1"/>
<dbReference type="EMBL" id="CP000482">
    <property type="protein sequence ID" value="ABL00482.1"/>
    <property type="molecule type" value="Genomic_DNA"/>
</dbReference>
<dbReference type="RefSeq" id="WP_011736717.1">
    <property type="nucleotide sequence ID" value="NC_008609.1"/>
</dbReference>
<dbReference type="SMR" id="A1AT11"/>
<dbReference type="STRING" id="338966.Ppro_2884"/>
<dbReference type="KEGG" id="ppd:Ppro_2884"/>
<dbReference type="eggNOG" id="COG0465">
    <property type="taxonomic scope" value="Bacteria"/>
</dbReference>
<dbReference type="HOGENOM" id="CLU_000688_16_2_7"/>
<dbReference type="OrthoDB" id="9809379at2"/>
<dbReference type="Proteomes" id="UP000006732">
    <property type="component" value="Chromosome"/>
</dbReference>
<dbReference type="GO" id="GO:0005886">
    <property type="term" value="C:plasma membrane"/>
    <property type="evidence" value="ECO:0007669"/>
    <property type="project" value="UniProtKB-SubCell"/>
</dbReference>
<dbReference type="GO" id="GO:0005524">
    <property type="term" value="F:ATP binding"/>
    <property type="evidence" value="ECO:0007669"/>
    <property type="project" value="UniProtKB-UniRule"/>
</dbReference>
<dbReference type="GO" id="GO:0016887">
    <property type="term" value="F:ATP hydrolysis activity"/>
    <property type="evidence" value="ECO:0007669"/>
    <property type="project" value="UniProtKB-UniRule"/>
</dbReference>
<dbReference type="GO" id="GO:0004176">
    <property type="term" value="F:ATP-dependent peptidase activity"/>
    <property type="evidence" value="ECO:0007669"/>
    <property type="project" value="InterPro"/>
</dbReference>
<dbReference type="GO" id="GO:0004222">
    <property type="term" value="F:metalloendopeptidase activity"/>
    <property type="evidence" value="ECO:0007669"/>
    <property type="project" value="InterPro"/>
</dbReference>
<dbReference type="GO" id="GO:0008270">
    <property type="term" value="F:zinc ion binding"/>
    <property type="evidence" value="ECO:0007669"/>
    <property type="project" value="UniProtKB-UniRule"/>
</dbReference>
<dbReference type="GO" id="GO:0030163">
    <property type="term" value="P:protein catabolic process"/>
    <property type="evidence" value="ECO:0007669"/>
    <property type="project" value="UniProtKB-UniRule"/>
</dbReference>
<dbReference type="GO" id="GO:0006508">
    <property type="term" value="P:proteolysis"/>
    <property type="evidence" value="ECO:0007669"/>
    <property type="project" value="UniProtKB-KW"/>
</dbReference>
<dbReference type="CDD" id="cd19501">
    <property type="entry name" value="RecA-like_FtsH"/>
    <property type="match status" value="1"/>
</dbReference>
<dbReference type="FunFam" id="1.10.8.60:FF:000001">
    <property type="entry name" value="ATP-dependent zinc metalloprotease FtsH"/>
    <property type="match status" value="1"/>
</dbReference>
<dbReference type="FunFam" id="1.20.58.760:FF:000001">
    <property type="entry name" value="ATP-dependent zinc metalloprotease FtsH"/>
    <property type="match status" value="1"/>
</dbReference>
<dbReference type="FunFam" id="3.40.50.300:FF:000001">
    <property type="entry name" value="ATP-dependent zinc metalloprotease FtsH"/>
    <property type="match status" value="1"/>
</dbReference>
<dbReference type="Gene3D" id="1.10.8.60">
    <property type="match status" value="1"/>
</dbReference>
<dbReference type="Gene3D" id="3.30.720.210">
    <property type="match status" value="1"/>
</dbReference>
<dbReference type="Gene3D" id="3.40.50.300">
    <property type="entry name" value="P-loop containing nucleotide triphosphate hydrolases"/>
    <property type="match status" value="1"/>
</dbReference>
<dbReference type="Gene3D" id="1.20.58.760">
    <property type="entry name" value="Peptidase M41"/>
    <property type="match status" value="1"/>
</dbReference>
<dbReference type="HAMAP" id="MF_01458">
    <property type="entry name" value="FtsH"/>
    <property type="match status" value="1"/>
</dbReference>
<dbReference type="InterPro" id="IPR003593">
    <property type="entry name" value="AAA+_ATPase"/>
</dbReference>
<dbReference type="InterPro" id="IPR041569">
    <property type="entry name" value="AAA_lid_3"/>
</dbReference>
<dbReference type="InterPro" id="IPR003959">
    <property type="entry name" value="ATPase_AAA_core"/>
</dbReference>
<dbReference type="InterPro" id="IPR003960">
    <property type="entry name" value="ATPase_AAA_CS"/>
</dbReference>
<dbReference type="InterPro" id="IPR005936">
    <property type="entry name" value="FtsH"/>
</dbReference>
<dbReference type="InterPro" id="IPR027417">
    <property type="entry name" value="P-loop_NTPase"/>
</dbReference>
<dbReference type="InterPro" id="IPR011546">
    <property type="entry name" value="Pept_M41_FtsH_extracell"/>
</dbReference>
<dbReference type="InterPro" id="IPR000642">
    <property type="entry name" value="Peptidase_M41"/>
</dbReference>
<dbReference type="InterPro" id="IPR037219">
    <property type="entry name" value="Peptidase_M41-like"/>
</dbReference>
<dbReference type="NCBIfam" id="TIGR01241">
    <property type="entry name" value="FtsH_fam"/>
    <property type="match status" value="1"/>
</dbReference>
<dbReference type="PANTHER" id="PTHR23076:SF97">
    <property type="entry name" value="ATP-DEPENDENT ZINC METALLOPROTEASE YME1L1"/>
    <property type="match status" value="1"/>
</dbReference>
<dbReference type="PANTHER" id="PTHR23076">
    <property type="entry name" value="METALLOPROTEASE M41 FTSH"/>
    <property type="match status" value="1"/>
</dbReference>
<dbReference type="Pfam" id="PF00004">
    <property type="entry name" value="AAA"/>
    <property type="match status" value="1"/>
</dbReference>
<dbReference type="Pfam" id="PF17862">
    <property type="entry name" value="AAA_lid_3"/>
    <property type="match status" value="1"/>
</dbReference>
<dbReference type="Pfam" id="PF06480">
    <property type="entry name" value="FtsH_ext"/>
    <property type="match status" value="1"/>
</dbReference>
<dbReference type="Pfam" id="PF01434">
    <property type="entry name" value="Peptidase_M41"/>
    <property type="match status" value="1"/>
</dbReference>
<dbReference type="SMART" id="SM00382">
    <property type="entry name" value="AAA"/>
    <property type="match status" value="1"/>
</dbReference>
<dbReference type="SUPFAM" id="SSF140990">
    <property type="entry name" value="FtsH protease domain-like"/>
    <property type="match status" value="1"/>
</dbReference>
<dbReference type="SUPFAM" id="SSF52540">
    <property type="entry name" value="P-loop containing nucleoside triphosphate hydrolases"/>
    <property type="match status" value="1"/>
</dbReference>
<dbReference type="PROSITE" id="PS00674">
    <property type="entry name" value="AAA"/>
    <property type="match status" value="1"/>
</dbReference>
<sequence length="623" mass="68435">MNQSFWRPLFAILLFMLVFHLTNIFFAQQGAQVAQISYSRLRAELAQDNIKKITLKGTAVTGEFRGKTRVSALVQGKEQQREFTGFSSVLPTIDDQTLVPELMARKVEVSALSTETPLLLNALIYVAPWVILIAIWWVGMRSMRSQGPSGMMGGFSRSGAKAYLAGDKMAVSFKDVAGMEDSKQELKEVVDYLRNPKQFARIGGKVPKGVLLVGPPGTGKTLLARAVAGEAGVAFFSISASQFIEMFVGVGASRVRDLFTNAKKAAPSIVFIDELDAVGRSRGAGFGGGHDEREQTLNQLLSEMDGFDQHEEVIVLAATNRPDVLDPALLRPGRFDRHVVIERPDWRDREKILQVHVRKITMNGRIDLGVIARGTPGMTGADLESLVNEAAILASRENAAAVTMEHLEKAKDKILMGSERRMIISLEEKRITAYHEAGHTLVARLLPGTDPIHKVTIIPHGMALGVTQQLPEDDRYHYPQSYLENRLVVAMGGRVAERLAFGEVSSGAQGDLKQVTSLAEKMVCQWGMSEKVGGMTFSRGEEHPFLGMKLAEEKTFSEAMAWRIDQEIAAFITRAEQRAGDLLSANRERLDLLAQALQDEETLDGSRVDEIIGSLNTAQAPPP</sequence>
<gene>
    <name evidence="1" type="primary">ftsH</name>
    <name type="ordered locus">Ppro_2884</name>
</gene>
<feature type="chain" id="PRO_5000182149" description="ATP-dependent zinc metalloprotease FtsH">
    <location>
        <begin position="1"/>
        <end position="623"/>
    </location>
</feature>
<feature type="topological domain" description="Cytoplasmic" evidence="1">
    <location>
        <begin position="1"/>
        <end position="7"/>
    </location>
</feature>
<feature type="transmembrane region" description="Helical" evidence="1">
    <location>
        <begin position="8"/>
        <end position="28"/>
    </location>
</feature>
<feature type="topological domain" description="Periplasmic" evidence="1">
    <location>
        <begin position="29"/>
        <end position="117"/>
    </location>
</feature>
<feature type="transmembrane region" description="Helical" evidence="1">
    <location>
        <begin position="118"/>
        <end position="138"/>
    </location>
</feature>
<feature type="topological domain" description="Cytoplasmic" evidence="1">
    <location>
        <begin position="139"/>
        <end position="623"/>
    </location>
</feature>
<feature type="active site" evidence="1">
    <location>
        <position position="436"/>
    </location>
</feature>
<feature type="binding site" evidence="1">
    <location>
        <begin position="214"/>
        <end position="221"/>
    </location>
    <ligand>
        <name>ATP</name>
        <dbReference type="ChEBI" id="CHEBI:30616"/>
    </ligand>
</feature>
<feature type="binding site" evidence="1">
    <location>
        <position position="435"/>
    </location>
    <ligand>
        <name>Zn(2+)</name>
        <dbReference type="ChEBI" id="CHEBI:29105"/>
        <note>catalytic</note>
    </ligand>
</feature>
<feature type="binding site" evidence="1">
    <location>
        <position position="439"/>
    </location>
    <ligand>
        <name>Zn(2+)</name>
        <dbReference type="ChEBI" id="CHEBI:29105"/>
        <note>catalytic</note>
    </ligand>
</feature>
<feature type="binding site" evidence="1">
    <location>
        <position position="511"/>
    </location>
    <ligand>
        <name>Zn(2+)</name>
        <dbReference type="ChEBI" id="CHEBI:29105"/>
        <note>catalytic</note>
    </ligand>
</feature>
<comment type="function">
    <text evidence="1">Acts as a processive, ATP-dependent zinc metallopeptidase for both cytoplasmic and membrane proteins. Plays a role in the quality control of integral membrane proteins.</text>
</comment>
<comment type="cofactor">
    <cofactor evidence="1">
        <name>Zn(2+)</name>
        <dbReference type="ChEBI" id="CHEBI:29105"/>
    </cofactor>
    <text evidence="1">Binds 1 zinc ion per subunit.</text>
</comment>
<comment type="subunit">
    <text evidence="1">Homohexamer.</text>
</comment>
<comment type="subcellular location">
    <subcellularLocation>
        <location evidence="1">Cell inner membrane</location>
        <topology evidence="1">Multi-pass membrane protein</topology>
        <orientation evidence="1">Cytoplasmic side</orientation>
    </subcellularLocation>
</comment>
<comment type="similarity">
    <text evidence="1">In the central section; belongs to the AAA ATPase family.</text>
</comment>
<comment type="similarity">
    <text evidence="1">In the C-terminal section; belongs to the peptidase M41 family.</text>
</comment>
<keyword id="KW-0067">ATP-binding</keyword>
<keyword id="KW-0997">Cell inner membrane</keyword>
<keyword id="KW-1003">Cell membrane</keyword>
<keyword id="KW-0378">Hydrolase</keyword>
<keyword id="KW-0472">Membrane</keyword>
<keyword id="KW-0479">Metal-binding</keyword>
<keyword id="KW-0482">Metalloprotease</keyword>
<keyword id="KW-0547">Nucleotide-binding</keyword>
<keyword id="KW-0645">Protease</keyword>
<keyword id="KW-1185">Reference proteome</keyword>
<keyword id="KW-0812">Transmembrane</keyword>
<keyword id="KW-1133">Transmembrane helix</keyword>
<keyword id="KW-0862">Zinc</keyword>
<evidence type="ECO:0000255" key="1">
    <source>
        <dbReference type="HAMAP-Rule" id="MF_01458"/>
    </source>
</evidence>
<accession>A1AT11</accession>
<organism>
    <name type="scientific">Pelobacter propionicus (strain DSM 2379 / NBRC 103807 / OttBd1)</name>
    <dbReference type="NCBI Taxonomy" id="338966"/>
    <lineage>
        <taxon>Bacteria</taxon>
        <taxon>Pseudomonadati</taxon>
        <taxon>Thermodesulfobacteriota</taxon>
        <taxon>Desulfuromonadia</taxon>
        <taxon>Desulfuromonadales</taxon>
        <taxon>Desulfuromonadaceae</taxon>
        <taxon>Pelobacter</taxon>
    </lineage>
</organism>
<name>FTSH_PELPD</name>